<feature type="signal peptide" evidence="2">
    <location>
        <begin position="1"/>
        <end position="27"/>
    </location>
</feature>
<feature type="chain" id="PRO_0000228831" description="Torsin-2A">
    <location>
        <begin position="28"/>
        <end position="321"/>
    </location>
</feature>
<feature type="binding site" evidence="2">
    <location>
        <begin position="93"/>
        <end position="100"/>
    </location>
    <ligand>
        <name>ATP</name>
        <dbReference type="ChEBI" id="CHEBI:30616"/>
    </ligand>
</feature>
<feature type="glycosylation site" description="N-linked (GlcNAc...) asparagine" evidence="2">
    <location>
        <position position="149"/>
    </location>
</feature>
<reference key="1">
    <citation type="journal article" date="2004" name="Genome Res.">
        <title>The status, quality, and expansion of the NIH full-length cDNA project: the Mammalian Gene Collection (MGC).</title>
        <authorList>
            <consortium name="The MGC Project Team"/>
        </authorList>
    </citation>
    <scope>NUCLEOTIDE SEQUENCE [LARGE SCALE MRNA]</scope>
    <source>
        <tissue>Kidney</tissue>
    </source>
</reference>
<keyword id="KW-0025">Alternative splicing</keyword>
<keyword id="KW-0067">ATP-binding</keyword>
<keyword id="KW-0256">Endoplasmic reticulum</keyword>
<keyword id="KW-0325">Glycoprotein</keyword>
<keyword id="KW-0547">Nucleotide-binding</keyword>
<keyword id="KW-1185">Reference proteome</keyword>
<keyword id="KW-0732">Signal</keyword>
<dbReference type="EMBL" id="BC078943">
    <property type="protein sequence ID" value="AAH78943.1"/>
    <property type="molecule type" value="mRNA"/>
</dbReference>
<dbReference type="RefSeq" id="NP_001007745.3">
    <molecule id="Q6AYR4-1"/>
    <property type="nucleotide sequence ID" value="NM_001007744.3"/>
</dbReference>
<dbReference type="SMR" id="Q6AYR4"/>
<dbReference type="FunCoup" id="Q6AYR4">
    <property type="interactions" value="719"/>
</dbReference>
<dbReference type="STRING" id="10116.ENSRNOP00000030747"/>
<dbReference type="GlyCosmos" id="Q6AYR4">
    <property type="glycosylation" value="1 site, No reported glycans"/>
</dbReference>
<dbReference type="GlyGen" id="Q6AYR4">
    <property type="glycosylation" value="1 site"/>
</dbReference>
<dbReference type="PhosphoSitePlus" id="Q6AYR4"/>
<dbReference type="PaxDb" id="10116-ENSRNOP00000030747"/>
<dbReference type="GeneID" id="362112"/>
<dbReference type="KEGG" id="rno:362112"/>
<dbReference type="AGR" id="RGD:1359111"/>
<dbReference type="CTD" id="27433"/>
<dbReference type="RGD" id="1359111">
    <property type="gene designation" value="Tor2a"/>
</dbReference>
<dbReference type="VEuPathDB" id="HostDB:ENSRNOG00000022514"/>
<dbReference type="eggNOG" id="KOG2170">
    <property type="taxonomic scope" value="Eukaryota"/>
</dbReference>
<dbReference type="HOGENOM" id="CLU_053537_0_0_1"/>
<dbReference type="InParanoid" id="Q6AYR4"/>
<dbReference type="OrthoDB" id="19623at2759"/>
<dbReference type="TreeFam" id="TF314941"/>
<dbReference type="Proteomes" id="UP000002494">
    <property type="component" value="Chromosome 3"/>
</dbReference>
<dbReference type="Bgee" id="ENSRNOG00000022514">
    <property type="expression patterns" value="Expressed in pancreas and 20 other cell types or tissues"/>
</dbReference>
<dbReference type="ExpressionAtlas" id="Q6AYR4">
    <property type="expression patterns" value="baseline and differential"/>
</dbReference>
<dbReference type="GO" id="GO:0005788">
    <property type="term" value="C:endoplasmic reticulum lumen"/>
    <property type="evidence" value="ECO:0000266"/>
    <property type="project" value="RGD"/>
</dbReference>
<dbReference type="GO" id="GO:0005576">
    <property type="term" value="C:extracellular region"/>
    <property type="evidence" value="ECO:0000266"/>
    <property type="project" value="RGD"/>
</dbReference>
<dbReference type="GO" id="GO:0005635">
    <property type="term" value="C:nuclear envelope"/>
    <property type="evidence" value="ECO:0000318"/>
    <property type="project" value="GO_Central"/>
</dbReference>
<dbReference type="GO" id="GO:0005524">
    <property type="term" value="F:ATP binding"/>
    <property type="evidence" value="ECO:0007669"/>
    <property type="project" value="UniProtKB-KW"/>
</dbReference>
<dbReference type="GO" id="GO:0016887">
    <property type="term" value="F:ATP hydrolysis activity"/>
    <property type="evidence" value="ECO:0007669"/>
    <property type="project" value="InterPro"/>
</dbReference>
<dbReference type="GO" id="GO:0042802">
    <property type="term" value="F:identical protein binding"/>
    <property type="evidence" value="ECO:0000266"/>
    <property type="project" value="RGD"/>
</dbReference>
<dbReference type="GO" id="GO:0051085">
    <property type="term" value="P:chaperone cofactor-dependent protein refolding"/>
    <property type="evidence" value="ECO:0007669"/>
    <property type="project" value="InterPro"/>
</dbReference>
<dbReference type="GO" id="GO:1904427">
    <property type="term" value="P:positive regulation of calcium ion transmembrane transport"/>
    <property type="evidence" value="ECO:0000266"/>
    <property type="project" value="RGD"/>
</dbReference>
<dbReference type="GO" id="GO:0010628">
    <property type="term" value="P:positive regulation of gene expression"/>
    <property type="evidence" value="ECO:0000266"/>
    <property type="project" value="RGD"/>
</dbReference>
<dbReference type="FunFam" id="3.40.50.300:FF:001014">
    <property type="entry name" value="Torsin"/>
    <property type="match status" value="1"/>
</dbReference>
<dbReference type="Gene3D" id="3.40.50.300">
    <property type="entry name" value="P-loop containing nucleotide triphosphate hydrolases"/>
    <property type="match status" value="1"/>
</dbReference>
<dbReference type="InterPro" id="IPR001270">
    <property type="entry name" value="ClpA/B"/>
</dbReference>
<dbReference type="InterPro" id="IPR027417">
    <property type="entry name" value="P-loop_NTPase"/>
</dbReference>
<dbReference type="InterPro" id="IPR049337">
    <property type="entry name" value="TOR1A_C"/>
</dbReference>
<dbReference type="InterPro" id="IPR010448">
    <property type="entry name" value="Torsin"/>
</dbReference>
<dbReference type="InterPro" id="IPR017378">
    <property type="entry name" value="Torsin_1/2"/>
</dbReference>
<dbReference type="PANTHER" id="PTHR10760">
    <property type="entry name" value="TORSIN"/>
    <property type="match status" value="1"/>
</dbReference>
<dbReference type="PANTHER" id="PTHR10760:SF4">
    <property type="entry name" value="TORSIN-2A"/>
    <property type="match status" value="1"/>
</dbReference>
<dbReference type="Pfam" id="PF21376">
    <property type="entry name" value="TOR1A_C"/>
    <property type="match status" value="1"/>
</dbReference>
<dbReference type="Pfam" id="PF06309">
    <property type="entry name" value="Torsin"/>
    <property type="match status" value="1"/>
</dbReference>
<dbReference type="PIRSF" id="PIRSF038079">
    <property type="entry name" value="Torsin_2A"/>
    <property type="match status" value="1"/>
</dbReference>
<dbReference type="PRINTS" id="PR00300">
    <property type="entry name" value="CLPPROTEASEA"/>
</dbReference>
<dbReference type="SUPFAM" id="SSF52540">
    <property type="entry name" value="P-loop containing nucleoside triphosphate hydrolases"/>
    <property type="match status" value="1"/>
</dbReference>
<gene>
    <name type="primary">Tor2a</name>
</gene>
<proteinExistence type="evidence at transcript level"/>
<sequence length="321" mass="35871">MAVARHGCPPWGSILGLLVLALAAAAAWDVSFLRCSLGSFCECDFWPDLPGLECDLARHLAGQHLAKALVVKSLKAFVQDPAPSKPLVLSLHGWTGTGKSYVSSLLAQYLFRGGLRSPHVHHFSPIIHFPHPSHTEQYKNELKSWVQGNLTACGRSLFLFDEMDKLPPGLMEVLKPFLGPSWVVYGTNYRKAIFIFISNTGGEQINQVALEAWRSRRDREEISLQEVEPAVSQAVLDNPHHGFWRSGIMEEQLLDAVVPFLPLQRHHVRHCVLNELAQLGLEPREEVVQAVLDSTTYFPEEEQLFSSNGCKTVASRITFFL</sequence>
<comment type="subunit">
    <text evidence="1">Homohexamer. Interacts with TOR1AIP1 (By similarity).</text>
</comment>
<comment type="subcellular location">
    <subcellularLocation>
        <location>Endoplasmic reticulum lumen</location>
    </subcellularLocation>
</comment>
<comment type="alternative products">
    <event type="alternative splicing"/>
    <isoform>
        <id>Q6AYR4-1</id>
        <name>1</name>
        <sequence type="displayed"/>
    </isoform>
    <isoform>
        <id>P0C7W2-1</id>
        <name>2</name>
        <sequence type="external"/>
    </isoform>
</comment>
<comment type="similarity">
    <text evidence="3">Belongs to the ClpA/ClpB family. Torsin subfamily.</text>
</comment>
<name>TOR2A_RAT</name>
<accession>Q6AYR4</accession>
<evidence type="ECO:0000250" key="1"/>
<evidence type="ECO:0000255" key="2"/>
<evidence type="ECO:0000305" key="3"/>
<organism>
    <name type="scientific">Rattus norvegicus</name>
    <name type="common">Rat</name>
    <dbReference type="NCBI Taxonomy" id="10116"/>
    <lineage>
        <taxon>Eukaryota</taxon>
        <taxon>Metazoa</taxon>
        <taxon>Chordata</taxon>
        <taxon>Craniata</taxon>
        <taxon>Vertebrata</taxon>
        <taxon>Euteleostomi</taxon>
        <taxon>Mammalia</taxon>
        <taxon>Eutheria</taxon>
        <taxon>Euarchontoglires</taxon>
        <taxon>Glires</taxon>
        <taxon>Rodentia</taxon>
        <taxon>Myomorpha</taxon>
        <taxon>Muroidea</taxon>
        <taxon>Muridae</taxon>
        <taxon>Murinae</taxon>
        <taxon>Rattus</taxon>
    </lineage>
</organism>
<protein>
    <recommendedName>
        <fullName>Torsin-2A</fullName>
    </recommendedName>
    <alternativeName>
        <fullName>Torsin family 2 member A</fullName>
    </alternativeName>
</protein>